<proteinExistence type="evidence at protein level"/>
<reference key="1">
    <citation type="journal article" date="2007" name="Proc. Natl. Acad. Sci. U.S.A.">
        <title>Dandruff-associated Malassezia genomes reveal convergent and divergent virulence traits shared with plant and human fungal pathogens.</title>
        <authorList>
            <person name="Xu J."/>
            <person name="Saunders C.W."/>
            <person name="Hu P."/>
            <person name="Grant R.A."/>
            <person name="Boekhout T."/>
            <person name="Kuramae E.E."/>
            <person name="Kronstad J.W."/>
            <person name="DeAngelis Y.M."/>
            <person name="Reeder N.L."/>
            <person name="Johnstone K.R."/>
            <person name="Leland M."/>
            <person name="Fieno A.M."/>
            <person name="Begley W.M."/>
            <person name="Sun Y."/>
            <person name="Lacey M.P."/>
            <person name="Chaudhary T."/>
            <person name="Keough T."/>
            <person name="Chu L."/>
            <person name="Sears R."/>
            <person name="Yuan B."/>
            <person name="Dawson T.L. Jr."/>
        </authorList>
    </citation>
    <scope>NUCLEOTIDE SEQUENCE [LARGE SCALE GENOMIC DNA]</scope>
    <scope>IDENTIFICATION</scope>
    <scope>FUNCTION</scope>
    <scope>SUBCELLULAR LOCATION</scope>
    <source>
        <strain>ATCC MYA-4612 / CBS 7966</strain>
    </source>
</reference>
<reference key="2">
    <citation type="journal article" date="2007" name="J. Invest. Dermatol.">
        <title>Isolation and expression of a Malassezia globosa lipase gene, LIP1.</title>
        <authorList>
            <person name="DeAngelis Y.M."/>
            <person name="Saunders C.W."/>
            <person name="Johnstone K.R."/>
            <person name="Reeder N.L."/>
            <person name="Coleman C.G."/>
            <person name="Kaczvinsky J.R. Jr."/>
            <person name="Gale C."/>
            <person name="Walter R."/>
            <person name="Mekel M."/>
            <person name="Lacey M.P."/>
            <person name="Keough T.W."/>
            <person name="Fieno A."/>
            <person name="Grant R.A."/>
            <person name="Begley B."/>
            <person name="Sun Y."/>
            <person name="Fuentes G."/>
            <person name="Youngquist R.S."/>
            <person name="Xu J."/>
            <person name="Dawson T.L. Jr."/>
        </authorList>
    </citation>
    <scope>PROTEIN SEQUENCE OF 237-258</scope>
    <scope>FUNCTION</scope>
    <scope>CATALYTIC ACTIVITY</scope>
    <scope>SUBSTRATE SPECIFICITY</scope>
    <scope>INDUCTION</scope>
</reference>
<reference key="3">
    <citation type="journal article" date="2012" name="Biochem. Biophys. Res. Commun.">
        <title>Molecular basis for substrate selectivity of a mono- and diacylglycerol lipase from Malassezia globosa.</title>
        <authorList>
            <person name="Liu L."/>
            <person name="Gao C."/>
            <person name="Lan D."/>
            <person name="Yang B."/>
            <person name="Wang Y."/>
        </authorList>
    </citation>
    <scope>FUNCTION</scope>
    <scope>DOMAIN</scope>
</reference>
<reference key="4">
    <citation type="journal article" date="2014" name="Biochimie">
        <title>Site-directed mutagenesis studies of the aromatic residues at the active site of a lipase from Malassezia globosa.</title>
        <authorList>
            <person name="Gao C."/>
            <person name="Lan D."/>
            <person name="Liu L."/>
            <person name="Zhang H."/>
            <person name="Yang B."/>
            <person name="Wang Y."/>
        </authorList>
    </citation>
    <scope>FUNCTION</scope>
    <scope>CATALYTIC ACTIVITY</scope>
    <scope>BIOPHYSICOCHEMICAL PROPERTIES</scope>
    <scope>DOMAIN</scope>
    <scope>MUTAGENESIS OF TRP-116 AND TRP-229</scope>
</reference>
<reference key="5">
    <citation type="journal article" date="2015" name="Bioorg. Med. Chem. Lett.">
        <title>Novel inhibitor against Malassezia globosa LIP1 (SMG1), a potential anti-dandruff target.</title>
        <authorList>
            <person name="Guo S."/>
            <person name="Huang W."/>
            <person name="Zhang J."/>
            <person name="Wang Y."/>
        </authorList>
    </citation>
    <scope>CATALYTIC ACTIVITY</scope>
    <scope>ACTIVITY REGULATION</scope>
</reference>
<reference key="6">
    <citation type="journal article" date="2015" name="ChemBioChem">
        <title>Conversion of a mono- and diacylglycerol lipase into a triacylglycerol lipase by protein engineering.</title>
        <authorList>
            <person name="Lan D."/>
            <person name="Popowicz G.M."/>
            <person name="Pavlidis I.V."/>
            <person name="Zhou P."/>
            <person name="Bornscheuer U.T."/>
            <person name="Wang Y."/>
        </authorList>
    </citation>
    <scope>FUNCTION</scope>
    <scope>CATALYTIC ACTIVITY</scope>
    <scope>SUBSTRATE SPECIFICITY</scope>
    <scope>MUTAGENESIS OF GLN-282</scope>
</reference>
<reference key="7">
    <citation type="journal article" date="2015" name="Int. J. Mol. Sci.">
        <title>Residue Asn277 affects the stability and substrate specificity of the SMG1 lipase from Malassezia globosa.</title>
        <authorList>
            <person name="Lan D."/>
            <person name="Wang Q."/>
            <person name="Xu J."/>
            <person name="Zhou P."/>
            <person name="Yang B."/>
            <person name="Wang Y."/>
        </authorList>
    </citation>
    <scope>FUNCTION</scope>
    <scope>CATALYTIC ACTIVITY</scope>
    <scope>MUTAGENESIS OF ASN-277</scope>
</reference>
<reference key="8">
    <citation type="journal article" date="2015" name="J. Microbiol. Biotechnol.">
        <title>The Role of residues 103, 104, and 278 in the activity of SMG1 lipase from Malassezia globosa: A site-directed mutagenesis study.</title>
        <authorList>
            <person name="Lan D."/>
            <person name="Wang Q."/>
            <person name="Popowicz G.M."/>
            <person name="Yang B."/>
            <person name="Tang Q."/>
            <person name="Wang Y."/>
        </authorList>
    </citation>
    <scope>FUNCTION</scope>
    <scope>CATALYTIC ACTIVITY</scope>
    <scope>MUTAGENESIS OF LEU-103; PHE-104 AND PHE-278</scope>
</reference>
<reference key="9">
    <citation type="journal article" date="2016" name="FEBS Open Bio">
        <title>Lid mobility in lipase SMG1 validated using a thiol/disulfide redox potential probe.</title>
        <authorList>
            <person name="Guo S."/>
            <person name="Popowicz G.M."/>
            <person name="Li D."/>
            <person name="Yuan D."/>
            <person name="Wang Y."/>
        </authorList>
    </citation>
    <scope>DOMAIN</scope>
</reference>
<reference key="10">
    <citation type="journal article" date="2016" name="J. Agric. Food Chem.">
        <title>Simplified Enzymatic Upgrading of High-Acid Rice Bran Oil Using Ethanol as a Novel Acyl Acceptor.</title>
        <authorList>
            <person name="Li D."/>
            <person name="Wang W."/>
            <person name="Durrani R."/>
            <person name="Li X."/>
            <person name="Yang B."/>
            <person name="Wang Y."/>
        </authorList>
    </citation>
    <scope>BIOTECHNOLOGY</scope>
    <scope>CATALYTIC ACTIVITY</scope>
    <scope>MUTAGENESIS OF PHE-278</scope>
</reference>
<reference key="11">
    <citation type="journal article" date="2016" name="Microbiology">
        <title>Secreted lipases from Malassezia globosa: recombinant expression and determination of their substrate specificities.</title>
        <authorList>
            <person name="Sommer B."/>
            <person name="Overy D.P."/>
            <person name="Haltli B."/>
            <person name="Kerr R.G."/>
        </authorList>
    </citation>
    <scope>FUNCTION</scope>
    <scope>CATALYTIC ACTIVITY</scope>
    <scope>SUBSTRATE SPECIFICITY</scope>
</reference>
<reference evidence="21 22" key="12">
    <citation type="journal article" date="2012" name="J. Struct. Biol.">
        <title>Crystal structure of a mono- and diacylglycerol lipase from Malassezia globosa reveals a novel lid conformation and insights into the substrate specificity.</title>
        <authorList>
            <person name="Xu T."/>
            <person name="Liu L."/>
            <person name="Hou S."/>
            <person name="Xu J."/>
            <person name="Yang B."/>
            <person name="Wang Y."/>
            <person name="Liu J."/>
        </authorList>
    </citation>
    <scope>X-RAY CRYSTALLOGRAPHY (1.45 ANGSTROMS) OF 26-304</scope>
    <scope>ACTIVE SITE</scope>
    <scope>DOMAIN</scope>
    <scope>DISULFIDE BONDS</scope>
    <scope>GLYCOSYLATION AT THR-32 AND ASN-253</scope>
</reference>
<reference evidence="23 24" key="13">
    <citation type="journal article" date="2015" name="FEBS J.">
        <title>Structure of product-bound SMG1 lipase: active site gating implications.</title>
        <authorList>
            <person name="Guo S."/>
            <person name="Xu J."/>
            <person name="Pavlidis I.V."/>
            <person name="Lan D."/>
            <person name="Bornscheuer U.T."/>
            <person name="Liu J."/>
            <person name="Wang Y."/>
        </authorList>
    </citation>
    <scope>X-RAY CRYSTALLOGRAPHY (2.00 ANGSTROMS) OF 20-304</scope>
    <scope>DISULFIDE BONDS</scope>
    <scope>FUNCTION</scope>
    <scope>CATALYTIC ACTIVITY</scope>
    <scope>SUBSTRATE SPECIFICITY</scope>
    <scope>MUTAGENESIS OF PHE-278</scope>
</reference>
<reference evidence="25" key="14">
    <citation type="submission" date="2021-11" db="PDB data bank">
        <title>Lipase SMG1 thermostability optimizing through protein design approach.</title>
        <authorList>
            <person name="Li L.L."/>
            <person name="Wang Y.H."/>
        </authorList>
    </citation>
    <scope>X-RAY CRYSTALLOGRAPHY (1.79 ANGSTROMS) OF 28-304</scope>
    <scope>DISULFIDE BONDS</scope>
</reference>
<dbReference type="EC" id="3.1.1.-" evidence="4"/>
<dbReference type="EMBL" id="AAYY01000002">
    <property type="protein sequence ID" value="EDP44990.1"/>
    <property type="molecule type" value="Genomic_DNA"/>
</dbReference>
<dbReference type="RefSeq" id="XP_001732204.1">
    <property type="nucleotide sequence ID" value="XM_001732152.1"/>
</dbReference>
<dbReference type="PDB" id="3UUE">
    <property type="method" value="X-ray"/>
    <property type="resolution" value="1.45 A"/>
    <property type="chains" value="A=26-304"/>
</dbReference>
<dbReference type="PDB" id="3UUF">
    <property type="method" value="X-ray"/>
    <property type="resolution" value="2.60 A"/>
    <property type="chains" value="A=27-304"/>
</dbReference>
<dbReference type="PDB" id="4ZRD">
    <property type="method" value="X-ray"/>
    <property type="resolution" value="2.30 A"/>
    <property type="chains" value="A=20-304"/>
</dbReference>
<dbReference type="PDB" id="4ZRE">
    <property type="method" value="X-ray"/>
    <property type="resolution" value="2.00 A"/>
    <property type="chains" value="A=20-304"/>
</dbReference>
<dbReference type="PDB" id="7SPR">
    <property type="method" value="X-ray"/>
    <property type="resolution" value="1.79 A"/>
    <property type="chains" value="A=28-304"/>
</dbReference>
<dbReference type="PDBsum" id="3UUE"/>
<dbReference type="PDBsum" id="3UUF"/>
<dbReference type="PDBsum" id="4ZRD"/>
<dbReference type="PDBsum" id="4ZRE"/>
<dbReference type="PDBsum" id="7SPR"/>
<dbReference type="SMR" id="A8PUY1"/>
<dbReference type="BindingDB" id="A8PUY1"/>
<dbReference type="ChEMBL" id="CHEMBL3608197"/>
<dbReference type="ESTHER" id="malgo-a8puy1">
    <property type="family name" value="Lipase_3"/>
</dbReference>
<dbReference type="iPTMnet" id="A8PUY1"/>
<dbReference type="GeneID" id="5856510"/>
<dbReference type="KEGG" id="mgl:MGL_0797"/>
<dbReference type="VEuPathDB" id="FungiDB:MGL_0797"/>
<dbReference type="InParanoid" id="A8PUY1"/>
<dbReference type="OMA" id="NHRGPYF"/>
<dbReference type="OrthoDB" id="426718at2759"/>
<dbReference type="BRENDA" id="3.1.1.79">
    <property type="organism ID" value="13511"/>
</dbReference>
<dbReference type="EvolutionaryTrace" id="A8PUY1"/>
<dbReference type="Proteomes" id="UP000008837">
    <property type="component" value="Unassembled WGS sequence"/>
</dbReference>
<dbReference type="GO" id="GO:0005576">
    <property type="term" value="C:extracellular region"/>
    <property type="evidence" value="ECO:0007669"/>
    <property type="project" value="UniProtKB-SubCell"/>
</dbReference>
<dbReference type="GO" id="GO:0016787">
    <property type="term" value="F:hydrolase activity"/>
    <property type="evidence" value="ECO:0007669"/>
    <property type="project" value="UniProtKB-KW"/>
</dbReference>
<dbReference type="GO" id="GO:0046872">
    <property type="term" value="F:metal ion binding"/>
    <property type="evidence" value="ECO:0007669"/>
    <property type="project" value="UniProtKB-KW"/>
</dbReference>
<dbReference type="GO" id="GO:0016042">
    <property type="term" value="P:lipid catabolic process"/>
    <property type="evidence" value="ECO:0007669"/>
    <property type="project" value="UniProtKB-KW"/>
</dbReference>
<dbReference type="CDD" id="cd00519">
    <property type="entry name" value="Lipase_3"/>
    <property type="match status" value="1"/>
</dbReference>
<dbReference type="Gene3D" id="3.40.50.1820">
    <property type="entry name" value="alpha/beta hydrolase"/>
    <property type="match status" value="1"/>
</dbReference>
<dbReference type="InterPro" id="IPR029058">
    <property type="entry name" value="AB_hydrolase_fold"/>
</dbReference>
<dbReference type="InterPro" id="IPR002921">
    <property type="entry name" value="Fungal_lipase-type"/>
</dbReference>
<dbReference type="InterPro" id="IPR051218">
    <property type="entry name" value="Sec_MonoDiacylglyc_Lipase"/>
</dbReference>
<dbReference type="PANTHER" id="PTHR45856">
    <property type="entry name" value="ALPHA/BETA-HYDROLASES SUPERFAMILY PROTEIN"/>
    <property type="match status" value="1"/>
</dbReference>
<dbReference type="PANTHER" id="PTHR45856:SF24">
    <property type="entry name" value="FUNGAL LIPASE-LIKE DOMAIN-CONTAINING PROTEIN"/>
    <property type="match status" value="1"/>
</dbReference>
<dbReference type="Pfam" id="PF01764">
    <property type="entry name" value="Lipase_3"/>
    <property type="match status" value="1"/>
</dbReference>
<dbReference type="SUPFAM" id="SSF53474">
    <property type="entry name" value="alpha/beta-Hydrolases"/>
    <property type="match status" value="1"/>
</dbReference>
<dbReference type="PROSITE" id="PS00120">
    <property type="entry name" value="LIPASE_SER"/>
    <property type="match status" value="1"/>
</dbReference>
<keyword id="KW-0002">3D-structure</keyword>
<keyword id="KW-0134">Cell wall</keyword>
<keyword id="KW-0903">Direct protein sequencing</keyword>
<keyword id="KW-1015">Disulfide bond</keyword>
<keyword id="KW-0325">Glycoprotein</keyword>
<keyword id="KW-0378">Hydrolase</keyword>
<keyword id="KW-0442">Lipid degradation</keyword>
<keyword id="KW-0443">Lipid metabolism</keyword>
<keyword id="KW-0479">Metal-binding</keyword>
<keyword id="KW-1185">Reference proteome</keyword>
<keyword id="KW-0964">Secreted</keyword>
<keyword id="KW-0732">Signal</keyword>
<keyword id="KW-0843">Virulence</keyword>
<accession>A8PUY1</accession>
<evidence type="ECO:0000255" key="1"/>
<evidence type="ECO:0000255" key="2">
    <source>
        <dbReference type="PROSITE-ProRule" id="PRU00498"/>
    </source>
</evidence>
<evidence type="ECO:0000255" key="3">
    <source>
        <dbReference type="PROSITE-ProRule" id="PRU10037"/>
    </source>
</evidence>
<evidence type="ECO:0000269" key="4">
    <source>
    </source>
</evidence>
<evidence type="ECO:0000269" key="5">
    <source>
    </source>
</evidence>
<evidence type="ECO:0000269" key="6">
    <source>
    </source>
</evidence>
<evidence type="ECO:0000269" key="7">
    <source>
    </source>
</evidence>
<evidence type="ECO:0000269" key="8">
    <source>
    </source>
</evidence>
<evidence type="ECO:0000269" key="9">
    <source>
    </source>
</evidence>
<evidence type="ECO:0000269" key="10">
    <source>
    </source>
</evidence>
<evidence type="ECO:0000269" key="11">
    <source>
    </source>
</evidence>
<evidence type="ECO:0000269" key="12">
    <source>
    </source>
</evidence>
<evidence type="ECO:0000269" key="13">
    <source>
    </source>
</evidence>
<evidence type="ECO:0000269" key="14">
    <source>
    </source>
</evidence>
<evidence type="ECO:0000269" key="15">
    <source>
    </source>
</evidence>
<evidence type="ECO:0000269" key="16">
    <source>
    </source>
</evidence>
<evidence type="ECO:0000303" key="17">
    <source>
    </source>
</evidence>
<evidence type="ECO:0000303" key="18">
    <source>
    </source>
</evidence>
<evidence type="ECO:0000303" key="19">
    <source>
    </source>
</evidence>
<evidence type="ECO:0000305" key="20"/>
<evidence type="ECO:0007744" key="21">
    <source>
        <dbReference type="PDB" id="3UUE"/>
    </source>
</evidence>
<evidence type="ECO:0007744" key="22">
    <source>
        <dbReference type="PDB" id="3UUF"/>
    </source>
</evidence>
<evidence type="ECO:0007744" key="23">
    <source>
        <dbReference type="PDB" id="4ZRD"/>
    </source>
</evidence>
<evidence type="ECO:0007744" key="24">
    <source>
        <dbReference type="PDB" id="4ZRE"/>
    </source>
</evidence>
<evidence type="ECO:0007744" key="25">
    <source>
        <dbReference type="PDB" id="7SPR"/>
    </source>
</evidence>
<evidence type="ECO:0007829" key="26">
    <source>
        <dbReference type="PDB" id="3UUE"/>
    </source>
</evidence>
<evidence type="ECO:0007829" key="27">
    <source>
        <dbReference type="PDB" id="4ZRE"/>
    </source>
</evidence>
<organism>
    <name type="scientific">Malassezia globosa (strain ATCC MYA-4612 / CBS 7966)</name>
    <name type="common">Dandruff-associated fungus</name>
    <dbReference type="NCBI Taxonomy" id="425265"/>
    <lineage>
        <taxon>Eukaryota</taxon>
        <taxon>Fungi</taxon>
        <taxon>Dikarya</taxon>
        <taxon>Basidiomycota</taxon>
        <taxon>Ustilaginomycotina</taxon>
        <taxon>Malasseziomycetes</taxon>
        <taxon>Malasseziales</taxon>
        <taxon>Malasseziaceae</taxon>
        <taxon>Malassezia</taxon>
    </lineage>
</organism>
<name>LIP1_MALGO</name>
<protein>
    <recommendedName>
        <fullName evidence="17">Secreted mono- and diacylglycerol lipase LIP1</fullName>
        <ecNumber evidence="4">3.1.1.-</ecNumber>
    </recommendedName>
</protein>
<feature type="signal peptide" evidence="1">
    <location>
        <begin position="1"/>
        <end position="19"/>
    </location>
</feature>
<feature type="chain" id="PRO_5002727093" description="Secreted mono- and diacylglycerol lipase LIP1">
    <location>
        <begin position="20"/>
        <end position="304"/>
    </location>
</feature>
<feature type="active site" description="Nucleophile" evidence="3 6 21 22">
    <location>
        <position position="171"/>
    </location>
</feature>
<feature type="active site" evidence="6 21 22">
    <location>
        <position position="228"/>
    </location>
</feature>
<feature type="active site" evidence="6 21 22">
    <location>
        <position position="281"/>
    </location>
</feature>
<feature type="glycosylation site" description="O-linked (Man...) threonine" evidence="6 21 22">
    <location>
        <position position="32"/>
    </location>
</feature>
<feature type="glycosylation site" description="N-linked (GlcNAc...) asparagine" evidence="2 6 21 22">
    <location>
        <position position="253"/>
    </location>
</feature>
<feature type="disulfide bond" evidence="6 13 21 22">
    <location>
        <begin position="57"/>
        <end position="297"/>
    </location>
</feature>
<feature type="mutagenesis site" description="Leads to increased activity on pNP-C8 by approximately 2-fold." evidence="12">
    <original>L</original>
    <variation>G</variation>
    <location>
        <position position="103"/>
    </location>
</feature>
<feature type="mutagenesis site" description="Leads to an approximate 40% decrease in pNP-C8 activity." evidence="12">
    <original>F</original>
    <variation>G</variation>
    <location>
        <position position="104"/>
    </location>
</feature>
<feature type="mutagenesis site" description="Decreases the optimum temperatures to 20 degrees Celsius and shifts the optimum pH from 6 to 4. Hydrolyzes preferentially long p-NP esters (C12 to C16), with relatively low activity on short and medium-chain esters (C4 to C10). Changes optimum substrate from p-nitrophenyl caprylate to p-nitrophenyl myristate. Decreases considerably specific activity." evidence="8">
    <original>W</original>
    <variation>A</variation>
    <location>
        <position position="116"/>
    </location>
</feature>
<feature type="mutagenesis site" description="Decreases the optimum temperatures to 10 degrees Celsius and shifts the optimum pH from 6 to 5. Decreases considerably specific activity." evidence="8">
    <original>W</original>
    <variation>F</variation>
    <location>
        <position position="116"/>
    </location>
</feature>
<feature type="mutagenesis site" description="Decreases the optimum temperatures to 20 degrees Celsius and shifts the optimum pH from 6 to 4. Decreases considerably specific activity." evidence="8">
    <original>W</original>
    <variation>H</variation>
    <location>
        <position position="116"/>
    </location>
</feature>
<feature type="mutagenesis site" description="Decreases considerably specific activity." evidence="8">
    <original>W</original>
    <variation>A</variation>
    <location>
        <position position="229"/>
    </location>
</feature>
<feature type="mutagenesis site" description="Decreases the optimum temperatures to 20 degrees Celsius and shifts the optimum pH from 6 to 5. Improves the specific activity toward p-nitrophenyl myristate." evidence="8">
    <original>W</original>
    <variation>F</variation>
    <location>
        <position position="229"/>
    </location>
</feature>
<feature type="mutagenesis site" description="Decreases considerably specific activity." evidence="8">
    <original>W</original>
    <variation>H</variation>
    <location>
        <position position="229"/>
    </location>
</feature>
<feature type="mutagenesis site" description="Shows a clear preference for short- and medium-chain p-NP esters (C4 to C8). Decreases considerably specific activity." evidence="8">
    <original>W</original>
    <variation>L</variation>
    <location>
        <position position="229"/>
    </location>
</feature>
<feature type="mutagenesis site" description="Increases thermostability. Decreases considerably specific activity." evidence="9">
    <original>N</original>
    <variation>D</variation>
    <location>
        <position position="277"/>
    </location>
</feature>
<feature type="mutagenesis site" description="Shows a clear preference for short- and medium-chain p-NP esters (C4 to C8). Decreases considerably specific activity." evidence="9">
    <original>N</original>
    <variation>F</variation>
    <location>
        <position position="277"/>
    </location>
</feature>
<feature type="mutagenesis site" description="Decreases considerably specific activity." evidence="9">
    <original>N</original>
    <variation>L</variation>
    <variation>V</variation>
    <location>
        <position position="277"/>
    </location>
</feature>
<feature type="mutagenesis site" description="Retains approximately 78% of its activity toward DAG, but only 11% activity toward pNP octanoate (pNP-C8)." evidence="12">
    <original>F</original>
    <variation>A</variation>
    <location>
        <position position="278"/>
    </location>
</feature>
<feature type="mutagenesis site" description="Leads to a 6-fold increase in the hydrolytic activity toward diacylglycerols and a 3-fold increased esterification activity." evidence="13 16">
    <original>F</original>
    <variation>N</variation>
    <variation>T</variation>
    <location>
        <position position="278"/>
    </location>
</feature>
<feature type="mutagenesis site" description="Leads to the ability to hydrolyze triacylglycerol (TAG). Also acquires ability to synthesize TAGs by esterification of glycerol and fatty acids." evidence="19">
    <original>Q</original>
    <variation>L</variation>
    <location>
        <position position="282"/>
    </location>
</feature>
<feature type="helix" evidence="26">
    <location>
        <begin position="42"/>
        <end position="53"/>
    </location>
</feature>
<feature type="helix" evidence="26">
    <location>
        <begin position="54"/>
        <end position="56"/>
    </location>
</feature>
<feature type="strand" evidence="26">
    <location>
        <begin position="69"/>
        <end position="75"/>
    </location>
</feature>
<feature type="strand" evidence="26">
    <location>
        <begin position="78"/>
        <end position="81"/>
    </location>
</feature>
<feature type="strand" evidence="26">
    <location>
        <begin position="84"/>
        <end position="89"/>
    </location>
</feature>
<feature type="turn" evidence="26">
    <location>
        <begin position="90"/>
        <end position="92"/>
    </location>
</feature>
<feature type="strand" evidence="26">
    <location>
        <begin position="93"/>
        <end position="98"/>
    </location>
</feature>
<feature type="strand" evidence="27">
    <location>
        <begin position="106"/>
        <end position="108"/>
    </location>
</feature>
<feature type="helix" evidence="26">
    <location>
        <begin position="113"/>
        <end position="115"/>
    </location>
</feature>
<feature type="turn" evidence="26">
    <location>
        <begin position="122"/>
        <end position="124"/>
    </location>
</feature>
<feature type="helix" evidence="26">
    <location>
        <begin position="125"/>
        <end position="127"/>
    </location>
</feature>
<feature type="helix" evidence="26">
    <location>
        <begin position="136"/>
        <end position="160"/>
    </location>
</feature>
<feature type="strand" evidence="26">
    <location>
        <begin position="165"/>
        <end position="170"/>
    </location>
</feature>
<feature type="helix" evidence="26">
    <location>
        <begin position="172"/>
        <end position="187"/>
    </location>
</feature>
<feature type="strand" evidence="26">
    <location>
        <begin position="193"/>
        <end position="199"/>
    </location>
</feature>
<feature type="helix" evidence="26">
    <location>
        <begin position="206"/>
        <end position="216"/>
    </location>
</feature>
<feature type="helix" evidence="26">
    <location>
        <begin position="217"/>
        <end position="219"/>
    </location>
</feature>
<feature type="strand" evidence="26">
    <location>
        <begin position="220"/>
        <end position="225"/>
    </location>
</feature>
<feature type="helix" evidence="26">
    <location>
        <begin position="230"/>
        <end position="232"/>
    </location>
</feature>
<feature type="helix" evidence="26">
    <location>
        <begin position="236"/>
        <end position="238"/>
    </location>
</feature>
<feature type="strand" evidence="26">
    <location>
        <begin position="246"/>
        <end position="251"/>
    </location>
</feature>
<feature type="strand" evidence="26">
    <location>
        <begin position="257"/>
        <end position="260"/>
    </location>
</feature>
<feature type="helix" evidence="26">
    <location>
        <begin position="269"/>
        <end position="271"/>
    </location>
</feature>
<feature type="strand" evidence="26">
    <location>
        <begin position="276"/>
        <end position="278"/>
    </location>
</feature>
<feature type="turn" evidence="26">
    <location>
        <begin position="279"/>
        <end position="282"/>
    </location>
</feature>
<feature type="strand" evidence="26">
    <location>
        <begin position="283"/>
        <end position="285"/>
    </location>
</feature>
<feature type="helix" evidence="26">
    <location>
        <begin position="292"/>
        <end position="294"/>
    </location>
</feature>
<comment type="function">
    <text evidence="4 5 7 9 10 12 13 14">Secreted lipase involved in Dandruff and seborrheic dermatitis (D/SD) probably via lipase-mediated breakdown of sebaceous lipids and release of irritating free fatty acids (PubMed:17460728, PubMed:18000048). Shows activity against monoglyceride and diglyceride substrates, but not triglyceride substrates and does not exhibit regio-selective production of diacylglycerols (PubMed:17460728, PubMed:22750000, PubMed:25837472, PubMed:25955297, PubMed:26239010, PubMed:26365206, PubMed:27130210). Able to hydrolyze diacylglycerols such as distearin, dilinolein, dipalmitoylglycerol and dipalmitolein (PubMed:27130210). Cleaves oleic acid from 1,2 isomers of diolein on both the 1 and the 2 position of the glycerol backbone, resulting mainly in free fatty acids but no monoolein is detected (PubMed:27130210). Shows activity on monoolein and liberates mostly free fatty acids, but can also perform the reverse reaction and produce diolein (PubMed:27130210).</text>
</comment>
<comment type="catalytic activity">
    <reaction evidence="4 8 9 10 11 12 13 14 16">
        <text>a monoacylglycerol + H2O = glycerol + a fatty acid + H(+)</text>
        <dbReference type="Rhea" id="RHEA:15245"/>
        <dbReference type="ChEBI" id="CHEBI:15377"/>
        <dbReference type="ChEBI" id="CHEBI:15378"/>
        <dbReference type="ChEBI" id="CHEBI:17408"/>
        <dbReference type="ChEBI" id="CHEBI:17754"/>
        <dbReference type="ChEBI" id="CHEBI:28868"/>
    </reaction>
</comment>
<comment type="catalytic activity">
    <reaction evidence="4 8 9 10 12 13 14 16">
        <text>a diacylglycerol + H2O = a monoacylglycerol + a fatty acid + H(+)</text>
        <dbReference type="Rhea" id="RHEA:32731"/>
        <dbReference type="ChEBI" id="CHEBI:15377"/>
        <dbReference type="ChEBI" id="CHEBI:15378"/>
        <dbReference type="ChEBI" id="CHEBI:17408"/>
        <dbReference type="ChEBI" id="CHEBI:18035"/>
        <dbReference type="ChEBI" id="CHEBI:28868"/>
    </reaction>
</comment>
<comment type="activity regulation">
    <text evidence="11">RHC 80267, a well-known inhibitor of diacylglycerol lipases from mammals, also acts as an inhibitor for LIP1/SMG1.</text>
</comment>
<comment type="biophysicochemical properties">
    <phDependence>
        <text evidence="8">Optimum pH is 6.0.</text>
    </phDependence>
    <temperatureDependence>
        <text evidence="8">Optimum temperature is 25 degrees Celsius.</text>
    </temperatureDependence>
</comment>
<comment type="subcellular location">
    <subcellularLocation>
        <location evidence="5">Secreted</location>
    </subcellularLocation>
    <subcellularLocation>
        <location evidence="5">Secreted</location>
        <location evidence="5">Cell wall</location>
    </subcellularLocation>
</comment>
<comment type="induction">
    <text evidence="6">Expressed on human scalp.</text>
</comment>
<comment type="domain">
    <text evidence="6 15">Residues Thr-101 to Asp-119 form the lid domain that covers on the active site. Upon absorption to a lipid-water interface, a movement of the lid from closed to open position is triggered.</text>
</comment>
<comment type="domain">
    <text evidence="6 7 8">Leu-103, Trp-116, Trp-229 and Phe-278, localized near active sites, are bulky residues that modulate substrate specificity and especially act as steric hindrances for triacylglycerol binding.</text>
</comment>
<comment type="biotechnology">
    <text evidence="16">A novel method for upgrading high-acid rice bran oil (RBO) by efficiently reducing the amount of free fatty acids uses ethanol as a novel acyl acceptor in combination with the highly selective lipase LIP1/SMG1-F278N and enables an unprecedented deacidification efficiency of up to 99.80% in a short time (6 h).</text>
</comment>
<comment type="similarity">
    <text evidence="20">Belongs to the AB hydrolase superfamily. Lipase family. Class 3 subfamily.</text>
</comment>
<sequence length="304" mass="33700">MLFSRFVLLAFGSVAAVSASSIYARGRGGSSTDQPVANPYNTKEISLAAGLVQQTYCDSTENGLKIGDSELLYTMGEGYARQRVNIYHSPSLGIAVAIEGTNLFSLNSDLHDAKFWQEDPNERYIQYYPKGTKLMHGFQQAYNDLMDDIFTAVKKYKKEKNEKRVTVIGHSLGAAMGLLCAMDIELRMDGGLYKTYLFGLPRLGNPTFASFVDQKIGDKFHSIINGRDWVPTVPPRALGYQHPSDYVWIYPGNSTSAKLYPGQENVHGILTVAREFNFDDHQGIYFHTQIGAVMGECPAQVGAH</sequence>
<gene>
    <name evidence="17" type="primary">LIP1</name>
    <name evidence="18" type="synonym">SMG1</name>
    <name type="ORF">MGL_0797</name>
</gene>